<reference key="1">
    <citation type="journal article" date="1998" name="Nature">
        <title>Deciphering the biology of Mycobacterium tuberculosis from the complete genome sequence.</title>
        <authorList>
            <person name="Cole S.T."/>
            <person name="Brosch R."/>
            <person name="Parkhill J."/>
            <person name="Garnier T."/>
            <person name="Churcher C.M."/>
            <person name="Harris D.E."/>
            <person name="Gordon S.V."/>
            <person name="Eiglmeier K."/>
            <person name="Gas S."/>
            <person name="Barry C.E. III"/>
            <person name="Tekaia F."/>
            <person name="Badcock K."/>
            <person name="Basham D."/>
            <person name="Brown D."/>
            <person name="Chillingworth T."/>
            <person name="Connor R."/>
            <person name="Davies R.M."/>
            <person name="Devlin K."/>
            <person name="Feltwell T."/>
            <person name="Gentles S."/>
            <person name="Hamlin N."/>
            <person name="Holroyd S."/>
            <person name="Hornsby T."/>
            <person name="Jagels K."/>
            <person name="Krogh A."/>
            <person name="McLean J."/>
            <person name="Moule S."/>
            <person name="Murphy L.D."/>
            <person name="Oliver S."/>
            <person name="Osborne J."/>
            <person name="Quail M.A."/>
            <person name="Rajandream M.A."/>
            <person name="Rogers J."/>
            <person name="Rutter S."/>
            <person name="Seeger K."/>
            <person name="Skelton S."/>
            <person name="Squares S."/>
            <person name="Squares R."/>
            <person name="Sulston J.E."/>
            <person name="Taylor K."/>
            <person name="Whitehead S."/>
            <person name="Barrell B.G."/>
        </authorList>
    </citation>
    <scope>NUCLEOTIDE SEQUENCE [LARGE SCALE GENOMIC DNA]</scope>
    <source>
        <strain>ATCC 25618 / H37Rv</strain>
    </source>
</reference>
<feature type="chain" id="PRO_0000104050" description="Uncharacterized protein Rv2570">
    <location>
        <begin position="1"/>
        <end position="129"/>
    </location>
</feature>
<keyword id="KW-1185">Reference proteome</keyword>
<accession>P9WL91</accession>
<accession>L0TA80</accession>
<accession>P65013</accession>
<accession>Q50651</accession>
<proteinExistence type="predicted"/>
<protein>
    <recommendedName>
        <fullName>Uncharacterized protein Rv2570</fullName>
    </recommendedName>
</protein>
<dbReference type="EMBL" id="AL123456">
    <property type="protein sequence ID" value="CCP45366.1"/>
    <property type="molecule type" value="Genomic_DNA"/>
</dbReference>
<dbReference type="PIR" id="A70724">
    <property type="entry name" value="A70724"/>
</dbReference>
<dbReference type="RefSeq" id="NP_217086.1">
    <property type="nucleotide sequence ID" value="NC_000962.3"/>
</dbReference>
<dbReference type="RefSeq" id="WP_003413336.1">
    <property type="nucleotide sequence ID" value="NZ_NVQJ01000023.1"/>
</dbReference>
<dbReference type="SMR" id="P9WL91"/>
<dbReference type="STRING" id="83332.Rv2570"/>
<dbReference type="PaxDb" id="83332-Rv2570"/>
<dbReference type="DNASU" id="887377"/>
<dbReference type="GeneID" id="887377"/>
<dbReference type="KEGG" id="mtu:Rv2570"/>
<dbReference type="KEGG" id="mtv:RVBD_2570"/>
<dbReference type="TubercuList" id="Rv2570"/>
<dbReference type="eggNOG" id="COG3801">
    <property type="taxonomic scope" value="Bacteria"/>
</dbReference>
<dbReference type="InParanoid" id="P9WL91"/>
<dbReference type="OrthoDB" id="6167040at2"/>
<dbReference type="PhylomeDB" id="P9WL91"/>
<dbReference type="Proteomes" id="UP000001584">
    <property type="component" value="Chromosome"/>
</dbReference>
<gene>
    <name type="ordered locus">Rv2570</name>
    <name type="ORF">MTCY227.31c</name>
</gene>
<name>Y2570_MYCTU</name>
<organism>
    <name type="scientific">Mycobacterium tuberculosis (strain ATCC 25618 / H37Rv)</name>
    <dbReference type="NCBI Taxonomy" id="83332"/>
    <lineage>
        <taxon>Bacteria</taxon>
        <taxon>Bacillati</taxon>
        <taxon>Actinomycetota</taxon>
        <taxon>Actinomycetes</taxon>
        <taxon>Mycobacteriales</taxon>
        <taxon>Mycobacteriaceae</taxon>
        <taxon>Mycobacterium</taxon>
        <taxon>Mycobacterium tuberculosis complex</taxon>
    </lineage>
</organism>
<sequence length="129" mass="14264">MATWDDVARIVGGLPLTAEQAPHDWRVGRKLLAWERPLRKSDREALTRAGSEPPSGDIVGVRVSDEGVKFALIADEPGVYFTTPHFDGYPAVLVRLAEIEVRDLEELITEAWLMQAPKQLVQAFLANSG</sequence>